<protein>
    <recommendedName>
        <fullName evidence="1">Large ribosomal subunit protein uL6</fullName>
    </recommendedName>
    <alternativeName>
        <fullName evidence="2">50S ribosomal protein L6</fullName>
    </alternativeName>
</protein>
<accession>B1WQS5</accession>
<dbReference type="EMBL" id="CP000806">
    <property type="protein sequence ID" value="ACB53377.1"/>
    <property type="molecule type" value="Genomic_DNA"/>
</dbReference>
<dbReference type="RefSeq" id="WP_009543883.1">
    <property type="nucleotide sequence ID" value="NC_010546.1"/>
</dbReference>
<dbReference type="SMR" id="B1WQS5"/>
<dbReference type="STRING" id="43989.cce_4029"/>
<dbReference type="KEGG" id="cyt:cce_4029"/>
<dbReference type="eggNOG" id="COG0097">
    <property type="taxonomic scope" value="Bacteria"/>
</dbReference>
<dbReference type="HOGENOM" id="CLU_065464_1_2_3"/>
<dbReference type="OrthoDB" id="9805007at2"/>
<dbReference type="Proteomes" id="UP000001203">
    <property type="component" value="Chromosome circular"/>
</dbReference>
<dbReference type="GO" id="GO:0022625">
    <property type="term" value="C:cytosolic large ribosomal subunit"/>
    <property type="evidence" value="ECO:0007669"/>
    <property type="project" value="TreeGrafter"/>
</dbReference>
<dbReference type="GO" id="GO:0019843">
    <property type="term" value="F:rRNA binding"/>
    <property type="evidence" value="ECO:0007669"/>
    <property type="project" value="UniProtKB-UniRule"/>
</dbReference>
<dbReference type="GO" id="GO:0003735">
    <property type="term" value="F:structural constituent of ribosome"/>
    <property type="evidence" value="ECO:0007669"/>
    <property type="project" value="InterPro"/>
</dbReference>
<dbReference type="GO" id="GO:0002181">
    <property type="term" value="P:cytoplasmic translation"/>
    <property type="evidence" value="ECO:0007669"/>
    <property type="project" value="TreeGrafter"/>
</dbReference>
<dbReference type="FunFam" id="3.90.930.12:FF:000001">
    <property type="entry name" value="50S ribosomal protein L6"/>
    <property type="match status" value="1"/>
</dbReference>
<dbReference type="FunFam" id="3.90.930.12:FF:000002">
    <property type="entry name" value="50S ribosomal protein L6"/>
    <property type="match status" value="1"/>
</dbReference>
<dbReference type="Gene3D" id="3.90.930.12">
    <property type="entry name" value="Ribosomal protein L6, alpha-beta domain"/>
    <property type="match status" value="2"/>
</dbReference>
<dbReference type="HAMAP" id="MF_01365_B">
    <property type="entry name" value="Ribosomal_uL6_B"/>
    <property type="match status" value="1"/>
</dbReference>
<dbReference type="InterPro" id="IPR000702">
    <property type="entry name" value="Ribosomal_uL6-like"/>
</dbReference>
<dbReference type="InterPro" id="IPR036789">
    <property type="entry name" value="Ribosomal_uL6-like_a/b-dom_sf"/>
</dbReference>
<dbReference type="InterPro" id="IPR020040">
    <property type="entry name" value="Ribosomal_uL6_a/b-dom"/>
</dbReference>
<dbReference type="InterPro" id="IPR019906">
    <property type="entry name" value="Ribosomal_uL6_bac-type"/>
</dbReference>
<dbReference type="InterPro" id="IPR002358">
    <property type="entry name" value="Ribosomal_uL6_CS"/>
</dbReference>
<dbReference type="NCBIfam" id="TIGR03654">
    <property type="entry name" value="L6_bact"/>
    <property type="match status" value="1"/>
</dbReference>
<dbReference type="PANTHER" id="PTHR11655">
    <property type="entry name" value="60S/50S RIBOSOMAL PROTEIN L6/L9"/>
    <property type="match status" value="1"/>
</dbReference>
<dbReference type="PANTHER" id="PTHR11655:SF14">
    <property type="entry name" value="LARGE RIBOSOMAL SUBUNIT PROTEIN UL6M"/>
    <property type="match status" value="1"/>
</dbReference>
<dbReference type="Pfam" id="PF00347">
    <property type="entry name" value="Ribosomal_L6"/>
    <property type="match status" value="2"/>
</dbReference>
<dbReference type="PIRSF" id="PIRSF002162">
    <property type="entry name" value="Ribosomal_L6"/>
    <property type="match status" value="1"/>
</dbReference>
<dbReference type="PRINTS" id="PR00059">
    <property type="entry name" value="RIBOSOMALL6"/>
</dbReference>
<dbReference type="SUPFAM" id="SSF56053">
    <property type="entry name" value="Ribosomal protein L6"/>
    <property type="match status" value="2"/>
</dbReference>
<dbReference type="PROSITE" id="PS00525">
    <property type="entry name" value="RIBOSOMAL_L6_1"/>
    <property type="match status" value="1"/>
</dbReference>
<evidence type="ECO:0000255" key="1">
    <source>
        <dbReference type="HAMAP-Rule" id="MF_01365"/>
    </source>
</evidence>
<evidence type="ECO:0000305" key="2"/>
<feature type="chain" id="PRO_1000166803" description="Large ribosomal subunit protein uL6">
    <location>
        <begin position="1"/>
        <end position="179"/>
    </location>
</feature>
<sequence>MSRIGKKPIPLPNKVTIDIKGQHIAVKGPKGSLELDLPSEVTVNQEGETVEVQRVDDSRTARERHGLFRTLVANMIQGVSQGFEKRLNIQGVGYRAQAQGSKLTLNVGYSKPVEMTMPQGINVAVENNTQVVVSGIDKEIVGNIAAKIRGVRPPEPYKGKGIRYQDEYVRRKAGKAGKK</sequence>
<name>RL6_CROS5</name>
<proteinExistence type="inferred from homology"/>
<gene>
    <name evidence="1" type="primary">rplF</name>
    <name evidence="1" type="synonym">rpl6</name>
    <name type="ordered locus">cce_4029</name>
</gene>
<reference key="1">
    <citation type="journal article" date="2008" name="Proc. Natl. Acad. Sci. U.S.A.">
        <title>The genome of Cyanothece 51142, a unicellular diazotrophic cyanobacterium important in the marine nitrogen cycle.</title>
        <authorList>
            <person name="Welsh E.A."/>
            <person name="Liberton M."/>
            <person name="Stoeckel J."/>
            <person name="Loh T."/>
            <person name="Elvitigala T."/>
            <person name="Wang C."/>
            <person name="Wollam A."/>
            <person name="Fulton R.S."/>
            <person name="Clifton S.W."/>
            <person name="Jacobs J.M."/>
            <person name="Aurora R."/>
            <person name="Ghosh B.K."/>
            <person name="Sherman L.A."/>
            <person name="Smith R.D."/>
            <person name="Wilson R.K."/>
            <person name="Pakrasi H.B."/>
        </authorList>
    </citation>
    <scope>NUCLEOTIDE SEQUENCE [LARGE SCALE GENOMIC DNA]</scope>
    <source>
        <strain>ATCC 51142 / BH68</strain>
    </source>
</reference>
<keyword id="KW-1185">Reference proteome</keyword>
<keyword id="KW-0687">Ribonucleoprotein</keyword>
<keyword id="KW-0689">Ribosomal protein</keyword>
<keyword id="KW-0694">RNA-binding</keyword>
<keyword id="KW-0699">rRNA-binding</keyword>
<comment type="function">
    <text evidence="1">This protein binds to the 23S rRNA, and is important in its secondary structure. It is located near the subunit interface in the base of the L7/L12 stalk, and near the tRNA binding site of the peptidyltransferase center.</text>
</comment>
<comment type="subunit">
    <text evidence="1">Part of the 50S ribosomal subunit.</text>
</comment>
<comment type="similarity">
    <text evidence="1">Belongs to the universal ribosomal protein uL6 family.</text>
</comment>
<organism>
    <name type="scientific">Crocosphaera subtropica (strain ATCC 51142 / BH68)</name>
    <name type="common">Cyanothece sp. (strain ATCC 51142)</name>
    <dbReference type="NCBI Taxonomy" id="43989"/>
    <lineage>
        <taxon>Bacteria</taxon>
        <taxon>Bacillati</taxon>
        <taxon>Cyanobacteriota</taxon>
        <taxon>Cyanophyceae</taxon>
        <taxon>Oscillatoriophycideae</taxon>
        <taxon>Chroococcales</taxon>
        <taxon>Aphanothecaceae</taxon>
        <taxon>Crocosphaera</taxon>
        <taxon>Crocosphaera subtropica</taxon>
    </lineage>
</organism>